<accession>Q9WZK0</accession>
<organism>
    <name type="scientific">Thermotoga maritima (strain ATCC 43589 / DSM 3109 / JCM 10099 / NBRC 100826 / MSB8)</name>
    <dbReference type="NCBI Taxonomy" id="243274"/>
    <lineage>
        <taxon>Bacteria</taxon>
        <taxon>Thermotogati</taxon>
        <taxon>Thermotogota</taxon>
        <taxon>Thermotogae</taxon>
        <taxon>Thermotogales</taxon>
        <taxon>Thermotogaceae</taxon>
        <taxon>Thermotoga</taxon>
    </lineage>
</organism>
<reference key="1">
    <citation type="journal article" date="1999" name="Nature">
        <title>Evidence for lateral gene transfer between Archaea and Bacteria from genome sequence of Thermotoga maritima.</title>
        <authorList>
            <person name="Nelson K.E."/>
            <person name="Clayton R.A."/>
            <person name="Gill S.R."/>
            <person name="Gwinn M.L."/>
            <person name="Dodson R.J."/>
            <person name="Haft D.H."/>
            <person name="Hickey E.K."/>
            <person name="Peterson J.D."/>
            <person name="Nelson W.C."/>
            <person name="Ketchum K.A."/>
            <person name="McDonald L.A."/>
            <person name="Utterback T.R."/>
            <person name="Malek J.A."/>
            <person name="Linher K.D."/>
            <person name="Garrett M.M."/>
            <person name="Stewart A.M."/>
            <person name="Cotton M.D."/>
            <person name="Pratt M.S."/>
            <person name="Phillips C.A."/>
            <person name="Richardson D.L."/>
            <person name="Heidelberg J.F."/>
            <person name="Sutton G.G."/>
            <person name="Fleischmann R.D."/>
            <person name="Eisen J.A."/>
            <person name="White O."/>
            <person name="Salzberg S.L."/>
            <person name="Smith H.O."/>
            <person name="Venter J.C."/>
            <person name="Fraser C.M."/>
        </authorList>
    </citation>
    <scope>NUCLEOTIDE SEQUENCE [LARGE SCALE GENOMIC DNA]</scope>
    <source>
        <strain>ATCC 43589 / DSM 3109 / JCM 10099 / NBRC 100826 / MSB8</strain>
    </source>
</reference>
<reference key="2">
    <citation type="submission" date="2004-07" db="PDB data bank">
        <title>Crystal structure of phosphopantetheine adenylyltransferase (TM0741) from Thermotoga maritima at 2.20 A resolution.</title>
        <authorList>
            <consortium name="Joint center for structural genomics (JCSG)"/>
        </authorList>
    </citation>
    <scope>X-RAY CRYSTALLOGRAPHY (2.20 ANGSTROMS) IN COMPLEX WITH PHOSPHOPANTETHEINE</scope>
    <scope>SUBUNIT</scope>
</reference>
<name>COAD_THEMA</name>
<keyword id="KW-0002">3D-structure</keyword>
<keyword id="KW-0067">ATP-binding</keyword>
<keyword id="KW-0173">Coenzyme A biosynthesis</keyword>
<keyword id="KW-0963">Cytoplasm</keyword>
<keyword id="KW-0460">Magnesium</keyword>
<keyword id="KW-0547">Nucleotide-binding</keyword>
<keyword id="KW-0548">Nucleotidyltransferase</keyword>
<keyword id="KW-1185">Reference proteome</keyword>
<keyword id="KW-0808">Transferase</keyword>
<feature type="chain" id="PRO_0000156296" description="Phosphopantetheine adenylyltransferase">
    <location>
        <begin position="1"/>
        <end position="161"/>
    </location>
</feature>
<feature type="binding site" evidence="1">
    <location>
        <begin position="8"/>
        <end position="9"/>
    </location>
    <ligand>
        <name>ATP</name>
        <dbReference type="ChEBI" id="CHEBI:30616"/>
    </ligand>
</feature>
<feature type="binding site" description="in other chain" evidence="1 2 3">
    <location>
        <position position="8"/>
    </location>
    <ligand>
        <name>substrate</name>
        <note>ligand shared between two neighboring subunits</note>
    </ligand>
</feature>
<feature type="binding site" evidence="1">
    <location>
        <position position="16"/>
    </location>
    <ligand>
        <name>ATP</name>
        <dbReference type="ChEBI" id="CHEBI:30616"/>
    </ligand>
</feature>
<feature type="binding site" description="in other chain" evidence="2 3">
    <location>
        <begin position="36"/>
        <end position="40"/>
    </location>
    <ligand>
        <name>substrate</name>
        <note>ligand shared between two neighboring subunits</note>
    </ligand>
</feature>
<feature type="binding site" description="in other chain" evidence="1 2 3">
    <location>
        <position position="72"/>
    </location>
    <ligand>
        <name>substrate</name>
        <note>ligand shared between two neighboring subunits</note>
    </ligand>
</feature>
<feature type="binding site" description="in other chain" evidence="1 2 3">
    <location>
        <position position="86"/>
    </location>
    <ligand>
        <name>substrate</name>
        <note>ligand shared between two neighboring subunits</note>
    </ligand>
</feature>
<feature type="binding site" evidence="1">
    <location>
        <begin position="87"/>
        <end position="89"/>
    </location>
    <ligand>
        <name>ATP</name>
        <dbReference type="ChEBI" id="CHEBI:30616"/>
    </ligand>
</feature>
<feature type="binding site" evidence="1">
    <location>
        <position position="97"/>
    </location>
    <ligand>
        <name>ATP</name>
        <dbReference type="ChEBI" id="CHEBI:30616"/>
    </ligand>
</feature>
<feature type="binding site" evidence="1">
    <location>
        <begin position="122"/>
        <end position="128"/>
    </location>
    <ligand>
        <name>ATP</name>
        <dbReference type="ChEBI" id="CHEBI:30616"/>
    </ligand>
</feature>
<feature type="binding site" evidence="2 3">
    <location>
        <position position="132"/>
    </location>
    <ligand>
        <name>substrate</name>
        <note>ligand shared between two neighboring subunits</note>
    </ligand>
</feature>
<feature type="site" description="Transition state stabilizer">
    <location>
        <position position="16"/>
    </location>
</feature>
<feature type="strand" evidence="4">
    <location>
        <begin position="2"/>
        <end position="7"/>
    </location>
</feature>
<feature type="helix" evidence="4">
    <location>
        <begin position="14"/>
        <end position="24"/>
    </location>
</feature>
<feature type="strand" evidence="4">
    <location>
        <begin position="28"/>
        <end position="35"/>
    </location>
</feature>
<feature type="helix" evidence="4">
    <location>
        <begin position="46"/>
        <end position="56"/>
    </location>
</feature>
<feature type="turn" evidence="4">
    <location>
        <begin position="57"/>
        <end position="59"/>
    </location>
</feature>
<feature type="strand" evidence="4">
    <location>
        <begin position="63"/>
        <end position="68"/>
    </location>
</feature>
<feature type="helix" evidence="4">
    <location>
        <begin position="72"/>
        <end position="79"/>
    </location>
</feature>
<feature type="strand" evidence="4">
    <location>
        <begin position="83"/>
        <end position="88"/>
    </location>
</feature>
<feature type="helix" evidence="4">
    <location>
        <begin position="94"/>
        <end position="107"/>
    </location>
</feature>
<feature type="strand" evidence="4">
    <location>
        <begin position="112"/>
        <end position="117"/>
    </location>
</feature>
<feature type="helix" evidence="4">
    <location>
        <begin position="120"/>
        <end position="122"/>
    </location>
</feature>
<feature type="helix" evidence="4">
    <location>
        <begin position="127"/>
        <end position="135"/>
    </location>
</feature>
<feature type="turn" evidence="4">
    <location>
        <begin position="141"/>
        <end position="143"/>
    </location>
</feature>
<feature type="helix" evidence="4">
    <location>
        <begin position="146"/>
        <end position="155"/>
    </location>
</feature>
<gene>
    <name evidence="1" type="primary">coaD</name>
    <name type="synonym">kdtB</name>
    <name type="ordered locus">TM_0741</name>
</gene>
<proteinExistence type="evidence at protein level"/>
<evidence type="ECO:0000255" key="1">
    <source>
        <dbReference type="HAMAP-Rule" id="MF_00151"/>
    </source>
</evidence>
<evidence type="ECO:0000269" key="2">
    <source ref="2"/>
</evidence>
<evidence type="ECO:0007744" key="3">
    <source>
        <dbReference type="PDB" id="1VLH"/>
    </source>
</evidence>
<evidence type="ECO:0007829" key="4">
    <source>
        <dbReference type="PDB" id="1VLH"/>
    </source>
</evidence>
<dbReference type="EC" id="2.7.7.3" evidence="1"/>
<dbReference type="EMBL" id="AE000512">
    <property type="protein sequence ID" value="AAD35822.1"/>
    <property type="molecule type" value="Genomic_DNA"/>
</dbReference>
<dbReference type="PIR" id="H72339">
    <property type="entry name" value="H72339"/>
</dbReference>
<dbReference type="RefSeq" id="NP_228550.1">
    <property type="nucleotide sequence ID" value="NC_000853.1"/>
</dbReference>
<dbReference type="RefSeq" id="WP_004080981.1">
    <property type="nucleotide sequence ID" value="NZ_CP011107.1"/>
</dbReference>
<dbReference type="PDB" id="1VLH">
    <property type="method" value="X-ray"/>
    <property type="resolution" value="2.20 A"/>
    <property type="chains" value="A/B/C/D/E/F=1-161"/>
</dbReference>
<dbReference type="PDBsum" id="1VLH"/>
<dbReference type="SMR" id="Q9WZK0"/>
<dbReference type="FunCoup" id="Q9WZK0">
    <property type="interactions" value="357"/>
</dbReference>
<dbReference type="STRING" id="243274.TM_0741"/>
<dbReference type="DrugBank" id="DB03912">
    <property type="generic name" value="D-pantetheine 4'-phosphate"/>
</dbReference>
<dbReference type="PaxDb" id="243274-THEMA_00950"/>
<dbReference type="EnsemblBacteria" id="AAD35822">
    <property type="protein sequence ID" value="AAD35822"/>
    <property type="gene ID" value="TM_0741"/>
</dbReference>
<dbReference type="KEGG" id="tma:TM0741"/>
<dbReference type="KEGG" id="tmi:THEMA_00950"/>
<dbReference type="KEGG" id="tmm:Tmari_0742"/>
<dbReference type="KEGG" id="tmw:THMA_0759"/>
<dbReference type="eggNOG" id="COG0669">
    <property type="taxonomic scope" value="Bacteria"/>
</dbReference>
<dbReference type="InParanoid" id="Q9WZK0"/>
<dbReference type="OrthoDB" id="9806661at2"/>
<dbReference type="UniPathway" id="UPA00241">
    <property type="reaction ID" value="UER00355"/>
</dbReference>
<dbReference type="EvolutionaryTrace" id="Q9WZK0"/>
<dbReference type="Proteomes" id="UP000008183">
    <property type="component" value="Chromosome"/>
</dbReference>
<dbReference type="GO" id="GO:0005737">
    <property type="term" value="C:cytoplasm"/>
    <property type="evidence" value="ECO:0007669"/>
    <property type="project" value="UniProtKB-SubCell"/>
</dbReference>
<dbReference type="GO" id="GO:0005524">
    <property type="term" value="F:ATP binding"/>
    <property type="evidence" value="ECO:0007669"/>
    <property type="project" value="UniProtKB-KW"/>
</dbReference>
<dbReference type="GO" id="GO:0004595">
    <property type="term" value="F:pantetheine-phosphate adenylyltransferase activity"/>
    <property type="evidence" value="ECO:0000318"/>
    <property type="project" value="GO_Central"/>
</dbReference>
<dbReference type="GO" id="GO:0015937">
    <property type="term" value="P:coenzyme A biosynthetic process"/>
    <property type="evidence" value="ECO:0000318"/>
    <property type="project" value="GO_Central"/>
</dbReference>
<dbReference type="CDD" id="cd02163">
    <property type="entry name" value="PPAT"/>
    <property type="match status" value="1"/>
</dbReference>
<dbReference type="Gene3D" id="3.40.50.620">
    <property type="entry name" value="HUPs"/>
    <property type="match status" value="1"/>
</dbReference>
<dbReference type="HAMAP" id="MF_00151">
    <property type="entry name" value="PPAT_bact"/>
    <property type="match status" value="1"/>
</dbReference>
<dbReference type="InterPro" id="IPR004821">
    <property type="entry name" value="Cyt_trans-like"/>
</dbReference>
<dbReference type="InterPro" id="IPR001980">
    <property type="entry name" value="PPAT"/>
</dbReference>
<dbReference type="InterPro" id="IPR014729">
    <property type="entry name" value="Rossmann-like_a/b/a_fold"/>
</dbReference>
<dbReference type="NCBIfam" id="TIGR01510">
    <property type="entry name" value="coaD_prev_kdtB"/>
    <property type="match status" value="1"/>
</dbReference>
<dbReference type="NCBIfam" id="TIGR00125">
    <property type="entry name" value="cyt_tran_rel"/>
    <property type="match status" value="1"/>
</dbReference>
<dbReference type="PANTHER" id="PTHR21342">
    <property type="entry name" value="PHOSPHOPANTETHEINE ADENYLYLTRANSFERASE"/>
    <property type="match status" value="1"/>
</dbReference>
<dbReference type="PANTHER" id="PTHR21342:SF1">
    <property type="entry name" value="PHOSPHOPANTETHEINE ADENYLYLTRANSFERASE"/>
    <property type="match status" value="1"/>
</dbReference>
<dbReference type="Pfam" id="PF01467">
    <property type="entry name" value="CTP_transf_like"/>
    <property type="match status" value="1"/>
</dbReference>
<dbReference type="PRINTS" id="PR01020">
    <property type="entry name" value="LPSBIOSNTHSS"/>
</dbReference>
<dbReference type="SUPFAM" id="SSF52374">
    <property type="entry name" value="Nucleotidylyl transferase"/>
    <property type="match status" value="1"/>
</dbReference>
<protein>
    <recommendedName>
        <fullName evidence="1">Phosphopantetheine adenylyltransferase</fullName>
        <ecNumber evidence="1">2.7.7.3</ecNumber>
    </recommendedName>
    <alternativeName>
        <fullName evidence="1">Dephospho-CoA pyrophosphorylase</fullName>
    </alternativeName>
    <alternativeName>
        <fullName evidence="1">Pantetheine-phosphate adenylyltransferase</fullName>
        <shortName evidence="1">PPAT</shortName>
    </alternativeName>
</protein>
<comment type="function">
    <text evidence="1">Reversibly transfers an adenylyl group from ATP to 4'-phosphopantetheine, yielding dephospho-CoA (dPCoA) and pyrophosphate.</text>
</comment>
<comment type="catalytic activity">
    <reaction evidence="1">
        <text>(R)-4'-phosphopantetheine + ATP + H(+) = 3'-dephospho-CoA + diphosphate</text>
        <dbReference type="Rhea" id="RHEA:19801"/>
        <dbReference type="ChEBI" id="CHEBI:15378"/>
        <dbReference type="ChEBI" id="CHEBI:30616"/>
        <dbReference type="ChEBI" id="CHEBI:33019"/>
        <dbReference type="ChEBI" id="CHEBI:57328"/>
        <dbReference type="ChEBI" id="CHEBI:61723"/>
        <dbReference type="EC" id="2.7.7.3"/>
    </reaction>
</comment>
<comment type="cofactor">
    <cofactor evidence="1">
        <name>Mg(2+)</name>
        <dbReference type="ChEBI" id="CHEBI:18420"/>
    </cofactor>
</comment>
<comment type="pathway">
    <text evidence="1">Cofactor biosynthesis; coenzyme A biosynthesis; CoA from (R)-pantothenate: step 4/5.</text>
</comment>
<comment type="subunit">
    <text evidence="1 2">Homohexamer.</text>
</comment>
<comment type="subcellular location">
    <subcellularLocation>
        <location evidence="1">Cytoplasm</location>
    </subcellularLocation>
</comment>
<comment type="similarity">
    <text evidence="1">Belongs to the bacterial CoaD family.</text>
</comment>
<sequence length="161" mass="18249">MKAVYPGSFDPITLGHVDIIKRALSIFDELVVLVTENPRKKCMFTLEERKKLIEEVLSDLDGVKVDVHHGLLVDYLKKHGIKVLVRGLRAVTDYEYELQMALANKKLYSDLETVFLIASEKFSFISSSLVKEVALYGGDVTEWVPPEVARALNEKLKEGKR</sequence>